<evidence type="ECO:0000255" key="1">
    <source>
        <dbReference type="HAMAP-Rule" id="MF_00227"/>
    </source>
</evidence>
<evidence type="ECO:0000256" key="2">
    <source>
        <dbReference type="SAM" id="MobiDB-lite"/>
    </source>
</evidence>
<proteinExistence type="inferred from homology"/>
<name>RNPA_PSESM</name>
<keyword id="KW-0255">Endonuclease</keyword>
<keyword id="KW-0378">Hydrolase</keyword>
<keyword id="KW-0540">Nuclease</keyword>
<keyword id="KW-1185">Reference proteome</keyword>
<keyword id="KW-0694">RNA-binding</keyword>
<keyword id="KW-0819">tRNA processing</keyword>
<feature type="chain" id="PRO_0000198513" description="Ribonuclease P protein component">
    <location>
        <begin position="1"/>
        <end position="133"/>
    </location>
</feature>
<feature type="region of interest" description="Disordered" evidence="2">
    <location>
        <begin position="114"/>
        <end position="133"/>
    </location>
</feature>
<reference key="1">
    <citation type="journal article" date="2003" name="Proc. Natl. Acad. Sci. U.S.A.">
        <title>The complete genome sequence of the Arabidopsis and tomato pathogen Pseudomonas syringae pv. tomato DC3000.</title>
        <authorList>
            <person name="Buell C.R."/>
            <person name="Joardar V."/>
            <person name="Lindeberg M."/>
            <person name="Selengut J."/>
            <person name="Paulsen I.T."/>
            <person name="Gwinn M.L."/>
            <person name="Dodson R.J."/>
            <person name="DeBoy R.T."/>
            <person name="Durkin A.S."/>
            <person name="Kolonay J.F."/>
            <person name="Madupu R."/>
            <person name="Daugherty S.C."/>
            <person name="Brinkac L.M."/>
            <person name="Beanan M.J."/>
            <person name="Haft D.H."/>
            <person name="Nelson W.C."/>
            <person name="Davidsen T.M."/>
            <person name="Zafar N."/>
            <person name="Zhou L."/>
            <person name="Liu J."/>
            <person name="Yuan Q."/>
            <person name="Khouri H.M."/>
            <person name="Fedorova N.B."/>
            <person name="Tran B."/>
            <person name="Russell D."/>
            <person name="Berry K.J."/>
            <person name="Utterback T.R."/>
            <person name="Van Aken S.E."/>
            <person name="Feldblyum T.V."/>
            <person name="D'Ascenzo M."/>
            <person name="Deng W.-L."/>
            <person name="Ramos A.R."/>
            <person name="Alfano J.R."/>
            <person name="Cartinhour S."/>
            <person name="Chatterjee A.K."/>
            <person name="Delaney T.P."/>
            <person name="Lazarowitz S.G."/>
            <person name="Martin G.B."/>
            <person name="Schneider D.J."/>
            <person name="Tang X."/>
            <person name="Bender C.L."/>
            <person name="White O."/>
            <person name="Fraser C.M."/>
            <person name="Collmer A."/>
        </authorList>
    </citation>
    <scope>NUCLEOTIDE SEQUENCE [LARGE SCALE GENOMIC DNA]</scope>
    <source>
        <strain>ATCC BAA-871 / DC3000</strain>
    </source>
</reference>
<comment type="function">
    <text evidence="1">RNaseP catalyzes the removal of the 5'-leader sequence from pre-tRNA to produce the mature 5'-terminus. It can also cleave other RNA substrates such as 4.5S RNA. The protein component plays an auxiliary but essential role in vivo by binding to the 5'-leader sequence and broadening the substrate specificity of the ribozyme.</text>
</comment>
<comment type="catalytic activity">
    <reaction evidence="1">
        <text>Endonucleolytic cleavage of RNA, removing 5'-extranucleotides from tRNA precursor.</text>
        <dbReference type="EC" id="3.1.26.5"/>
    </reaction>
</comment>
<comment type="subunit">
    <text evidence="1">Consists of a catalytic RNA component (M1 or rnpB) and a protein subunit.</text>
</comment>
<comment type="similarity">
    <text evidence="1">Belongs to the RnpA family.</text>
</comment>
<dbReference type="EC" id="3.1.26.5" evidence="1"/>
<dbReference type="EMBL" id="AE016853">
    <property type="protein sequence ID" value="AAO59027.1"/>
    <property type="molecule type" value="Genomic_DNA"/>
</dbReference>
<dbReference type="RefSeq" id="NP_795332.1">
    <property type="nucleotide sequence ID" value="NC_004578.1"/>
</dbReference>
<dbReference type="RefSeq" id="WP_005768230.1">
    <property type="nucleotide sequence ID" value="NC_004578.1"/>
</dbReference>
<dbReference type="SMR" id="Q87TR9"/>
<dbReference type="STRING" id="223283.PSPTO_5614"/>
<dbReference type="GeneID" id="1187306"/>
<dbReference type="KEGG" id="pst:PSPTO_5614"/>
<dbReference type="PATRIC" id="fig|223283.9.peg.5751"/>
<dbReference type="eggNOG" id="COG0594">
    <property type="taxonomic scope" value="Bacteria"/>
</dbReference>
<dbReference type="HOGENOM" id="CLU_117179_11_0_6"/>
<dbReference type="OrthoDB" id="9796422at2"/>
<dbReference type="PhylomeDB" id="Q87TR9"/>
<dbReference type="Proteomes" id="UP000002515">
    <property type="component" value="Chromosome"/>
</dbReference>
<dbReference type="GO" id="GO:0030677">
    <property type="term" value="C:ribonuclease P complex"/>
    <property type="evidence" value="ECO:0007669"/>
    <property type="project" value="TreeGrafter"/>
</dbReference>
<dbReference type="GO" id="GO:0042781">
    <property type="term" value="F:3'-tRNA processing endoribonuclease activity"/>
    <property type="evidence" value="ECO:0007669"/>
    <property type="project" value="TreeGrafter"/>
</dbReference>
<dbReference type="GO" id="GO:0004526">
    <property type="term" value="F:ribonuclease P activity"/>
    <property type="evidence" value="ECO:0007669"/>
    <property type="project" value="UniProtKB-UniRule"/>
</dbReference>
<dbReference type="GO" id="GO:0000049">
    <property type="term" value="F:tRNA binding"/>
    <property type="evidence" value="ECO:0007669"/>
    <property type="project" value="UniProtKB-UniRule"/>
</dbReference>
<dbReference type="GO" id="GO:0001682">
    <property type="term" value="P:tRNA 5'-leader removal"/>
    <property type="evidence" value="ECO:0007669"/>
    <property type="project" value="UniProtKB-UniRule"/>
</dbReference>
<dbReference type="Gene3D" id="3.30.230.10">
    <property type="match status" value="1"/>
</dbReference>
<dbReference type="HAMAP" id="MF_00227">
    <property type="entry name" value="RNase_P"/>
    <property type="match status" value="1"/>
</dbReference>
<dbReference type="InterPro" id="IPR020568">
    <property type="entry name" value="Ribosomal_Su5_D2-typ_SF"/>
</dbReference>
<dbReference type="InterPro" id="IPR014721">
    <property type="entry name" value="Ribsml_uS5_D2-typ_fold_subgr"/>
</dbReference>
<dbReference type="InterPro" id="IPR000100">
    <property type="entry name" value="RNase_P"/>
</dbReference>
<dbReference type="NCBIfam" id="TIGR00188">
    <property type="entry name" value="rnpA"/>
    <property type="match status" value="1"/>
</dbReference>
<dbReference type="PANTHER" id="PTHR33992">
    <property type="entry name" value="RIBONUCLEASE P PROTEIN COMPONENT"/>
    <property type="match status" value="1"/>
</dbReference>
<dbReference type="PANTHER" id="PTHR33992:SF1">
    <property type="entry name" value="RIBONUCLEASE P PROTEIN COMPONENT"/>
    <property type="match status" value="1"/>
</dbReference>
<dbReference type="Pfam" id="PF00825">
    <property type="entry name" value="Ribonuclease_P"/>
    <property type="match status" value="1"/>
</dbReference>
<dbReference type="SUPFAM" id="SSF54211">
    <property type="entry name" value="Ribosomal protein S5 domain 2-like"/>
    <property type="match status" value="1"/>
</dbReference>
<sequence>MSRDFSREKRLLTPRHFKAVFDSPTGKVPGKNLLLLARNNDLDHPRLGLVIGKKSVKLSVERNRLKRLMRESFRQHQDSLVGWDIVIVARKGLGDVENPELIQHFGKLWKRLARSRPTPEEKSEPAGVDSTDA</sequence>
<accession>Q87TR9</accession>
<organism>
    <name type="scientific">Pseudomonas syringae pv. tomato (strain ATCC BAA-871 / DC3000)</name>
    <dbReference type="NCBI Taxonomy" id="223283"/>
    <lineage>
        <taxon>Bacteria</taxon>
        <taxon>Pseudomonadati</taxon>
        <taxon>Pseudomonadota</taxon>
        <taxon>Gammaproteobacteria</taxon>
        <taxon>Pseudomonadales</taxon>
        <taxon>Pseudomonadaceae</taxon>
        <taxon>Pseudomonas</taxon>
    </lineage>
</organism>
<gene>
    <name evidence="1" type="primary">rnpA</name>
    <name type="ordered locus">PSPTO_5614</name>
</gene>
<protein>
    <recommendedName>
        <fullName evidence="1">Ribonuclease P protein component</fullName>
        <shortName evidence="1">RNase P protein</shortName>
        <shortName evidence="1">RNaseP protein</shortName>
        <ecNumber evidence="1">3.1.26.5</ecNumber>
    </recommendedName>
    <alternativeName>
        <fullName evidence="1">Protein C5</fullName>
    </alternativeName>
</protein>